<reference key="1">
    <citation type="submission" date="1997-08" db="EMBL/GenBank/DDBJ databases">
        <authorList>
            <person name="Kovari I.A."/>
            <person name="Goldsbrough P.B."/>
        </authorList>
    </citation>
    <scope>NUCLEOTIDE SEQUENCE [MRNA]</scope>
    <source>
        <strain>cv. Ohio state 4</strain>
    </source>
</reference>
<proteinExistence type="evidence at transcript level"/>
<protein>
    <recommendedName>
        <fullName>Glutathione synthetase, chloroplastic</fullName>
        <shortName>GSH synthetase</shortName>
        <shortName>GSH-S</shortName>
        <shortName>Glutathione synthase</shortName>
        <ecNumber>6.3.2.3</ecNumber>
    </recommendedName>
</protein>
<comment type="catalytic activity">
    <reaction>
        <text>gamma-L-glutamyl-L-cysteine + glycine + ATP = glutathione + ADP + phosphate + H(+)</text>
        <dbReference type="Rhea" id="RHEA:13557"/>
        <dbReference type="ChEBI" id="CHEBI:15378"/>
        <dbReference type="ChEBI" id="CHEBI:30616"/>
        <dbReference type="ChEBI" id="CHEBI:43474"/>
        <dbReference type="ChEBI" id="CHEBI:57305"/>
        <dbReference type="ChEBI" id="CHEBI:57925"/>
        <dbReference type="ChEBI" id="CHEBI:58173"/>
        <dbReference type="ChEBI" id="CHEBI:456216"/>
        <dbReference type="EC" id="6.3.2.3"/>
    </reaction>
</comment>
<comment type="cofactor">
    <cofactor evidence="1">
        <name>Mg(2+)</name>
        <dbReference type="ChEBI" id="CHEBI:18420"/>
    </cofactor>
    <text evidence="1">Binds 1 Mg(2+) ion per subunit.</text>
</comment>
<comment type="pathway">
    <text>Sulfur metabolism; glutathione biosynthesis; glutathione from L-cysteine and L-glutamate: step 2/2.</text>
</comment>
<comment type="subunit">
    <text evidence="1">Homodimer.</text>
</comment>
<comment type="subcellular location">
    <subcellularLocation>
        <location evidence="3">Plastid</location>
        <location evidence="3">Chloroplast</location>
    </subcellularLocation>
</comment>
<comment type="similarity">
    <text evidence="3">Belongs to the eukaryotic GSH synthase family.</text>
</comment>
<organism>
    <name type="scientific">Solanum lycopersicum</name>
    <name type="common">Tomato</name>
    <name type="synonym">Lycopersicon esculentum</name>
    <dbReference type="NCBI Taxonomy" id="4081"/>
    <lineage>
        <taxon>Eukaryota</taxon>
        <taxon>Viridiplantae</taxon>
        <taxon>Streptophyta</taxon>
        <taxon>Embryophyta</taxon>
        <taxon>Tracheophyta</taxon>
        <taxon>Spermatophyta</taxon>
        <taxon>Magnoliopsida</taxon>
        <taxon>eudicotyledons</taxon>
        <taxon>Gunneridae</taxon>
        <taxon>Pentapetalae</taxon>
        <taxon>asterids</taxon>
        <taxon>lamiids</taxon>
        <taxon>Solanales</taxon>
        <taxon>Solanaceae</taxon>
        <taxon>Solanoideae</taxon>
        <taxon>Solaneae</taxon>
        <taxon>Solanum</taxon>
        <taxon>Solanum subgen. Lycopersicon</taxon>
    </lineage>
</organism>
<dbReference type="EC" id="6.3.2.3"/>
<dbReference type="EMBL" id="AF017984">
    <property type="protein sequence ID" value="AAB71231.1"/>
    <property type="molecule type" value="mRNA"/>
</dbReference>
<dbReference type="PIR" id="T04336">
    <property type="entry name" value="T04336"/>
</dbReference>
<dbReference type="RefSeq" id="NP_001234014.2">
    <property type="nucleotide sequence ID" value="NM_001247085.3"/>
</dbReference>
<dbReference type="SMR" id="O22494"/>
<dbReference type="FunCoup" id="O22494">
    <property type="interactions" value="3705"/>
</dbReference>
<dbReference type="STRING" id="4081.O22494"/>
<dbReference type="PaxDb" id="4081-Solyc01g098610.2.1"/>
<dbReference type="GeneID" id="543537"/>
<dbReference type="KEGG" id="sly:543537"/>
<dbReference type="eggNOG" id="KOG0021">
    <property type="taxonomic scope" value="Eukaryota"/>
</dbReference>
<dbReference type="InParanoid" id="O22494"/>
<dbReference type="OrthoDB" id="2020073at2759"/>
<dbReference type="UniPathway" id="UPA00142">
    <property type="reaction ID" value="UER00210"/>
</dbReference>
<dbReference type="Proteomes" id="UP000004994">
    <property type="component" value="Unplaced"/>
</dbReference>
<dbReference type="ExpressionAtlas" id="O22494">
    <property type="expression patterns" value="baseline and differential"/>
</dbReference>
<dbReference type="GO" id="GO:0009507">
    <property type="term" value="C:chloroplast"/>
    <property type="evidence" value="ECO:0007669"/>
    <property type="project" value="UniProtKB-SubCell"/>
</dbReference>
<dbReference type="GO" id="GO:0005829">
    <property type="term" value="C:cytosol"/>
    <property type="evidence" value="ECO:0000318"/>
    <property type="project" value="GO_Central"/>
</dbReference>
<dbReference type="GO" id="GO:0005524">
    <property type="term" value="F:ATP binding"/>
    <property type="evidence" value="ECO:0000250"/>
    <property type="project" value="UniProtKB"/>
</dbReference>
<dbReference type="GO" id="GO:0043295">
    <property type="term" value="F:glutathione binding"/>
    <property type="evidence" value="ECO:0000250"/>
    <property type="project" value="UniProtKB"/>
</dbReference>
<dbReference type="GO" id="GO:0004363">
    <property type="term" value="F:glutathione synthase activity"/>
    <property type="evidence" value="ECO:0000318"/>
    <property type="project" value="GO_Central"/>
</dbReference>
<dbReference type="GO" id="GO:0000287">
    <property type="term" value="F:magnesium ion binding"/>
    <property type="evidence" value="ECO:0000250"/>
    <property type="project" value="UniProtKB"/>
</dbReference>
<dbReference type="GO" id="GO:0042803">
    <property type="term" value="F:protein homodimerization activity"/>
    <property type="evidence" value="ECO:0000250"/>
    <property type="project" value="UniProtKB"/>
</dbReference>
<dbReference type="CDD" id="cd00228">
    <property type="entry name" value="eu-GS"/>
    <property type="match status" value="1"/>
</dbReference>
<dbReference type="FunFam" id="1.10.1080.10:FF:000005">
    <property type="entry name" value="Glutathione synthetase"/>
    <property type="match status" value="1"/>
</dbReference>
<dbReference type="FunFam" id="3.30.1490.50:FF:000001">
    <property type="entry name" value="Glutathione synthetase"/>
    <property type="match status" value="1"/>
</dbReference>
<dbReference type="FunFam" id="3.30.1490.80:FF:000010">
    <property type="entry name" value="Glutathione synthetase"/>
    <property type="match status" value="1"/>
</dbReference>
<dbReference type="FunFam" id="3.30.470.20:FF:000092">
    <property type="entry name" value="Glutathione synthetase"/>
    <property type="match status" value="1"/>
</dbReference>
<dbReference type="FunFam" id="3.40.50.1760:FF:000002">
    <property type="entry name" value="Glutathione synthetase"/>
    <property type="match status" value="1"/>
</dbReference>
<dbReference type="Gene3D" id="3.30.1490.50">
    <property type="match status" value="1"/>
</dbReference>
<dbReference type="Gene3D" id="3.30.1490.80">
    <property type="match status" value="1"/>
</dbReference>
<dbReference type="Gene3D" id="3.30.470.20">
    <property type="entry name" value="ATP-grasp fold, B domain"/>
    <property type="match status" value="1"/>
</dbReference>
<dbReference type="Gene3D" id="3.40.50.1760">
    <property type="entry name" value="Glutathione synthase, substrate-binding domain superfamily, eukaryotic"/>
    <property type="match status" value="1"/>
</dbReference>
<dbReference type="Gene3D" id="1.10.1080.10">
    <property type="entry name" value="Glutathione Synthetase, Chain A, domain 3"/>
    <property type="match status" value="1"/>
</dbReference>
<dbReference type="InterPro" id="IPR005615">
    <property type="entry name" value="Glutathione_synthase"/>
</dbReference>
<dbReference type="InterPro" id="IPR014042">
    <property type="entry name" value="Glutathione_synthase_a-hlx"/>
</dbReference>
<dbReference type="InterPro" id="IPR014709">
    <property type="entry name" value="Glutathione_synthase_C_euk"/>
</dbReference>
<dbReference type="InterPro" id="IPR014049">
    <property type="entry name" value="Glutathione_synthase_N_euk"/>
</dbReference>
<dbReference type="InterPro" id="IPR037013">
    <property type="entry name" value="GSH-S_sub-bd_sf"/>
</dbReference>
<dbReference type="InterPro" id="IPR004887">
    <property type="entry name" value="GSH_synth_subst-bd"/>
</dbReference>
<dbReference type="InterPro" id="IPR016185">
    <property type="entry name" value="PreATP-grasp_dom_sf"/>
</dbReference>
<dbReference type="NCBIfam" id="TIGR01986">
    <property type="entry name" value="glut_syn_euk"/>
    <property type="match status" value="1"/>
</dbReference>
<dbReference type="PANTHER" id="PTHR11130">
    <property type="entry name" value="GLUTATHIONE SYNTHETASE"/>
    <property type="match status" value="1"/>
</dbReference>
<dbReference type="PANTHER" id="PTHR11130:SF0">
    <property type="entry name" value="GLUTATHIONE SYNTHETASE"/>
    <property type="match status" value="1"/>
</dbReference>
<dbReference type="Pfam" id="PF03917">
    <property type="entry name" value="GSH_synth_ATP"/>
    <property type="match status" value="1"/>
</dbReference>
<dbReference type="Pfam" id="PF03199">
    <property type="entry name" value="GSH_synthase"/>
    <property type="match status" value="1"/>
</dbReference>
<dbReference type="PIRSF" id="PIRSF001558">
    <property type="entry name" value="GSHase"/>
    <property type="match status" value="1"/>
</dbReference>
<dbReference type="SUPFAM" id="SSF56059">
    <property type="entry name" value="Glutathione synthetase ATP-binding domain-like"/>
    <property type="match status" value="1"/>
</dbReference>
<dbReference type="SUPFAM" id="SSF52440">
    <property type="entry name" value="PreATP-grasp domain"/>
    <property type="match status" value="1"/>
</dbReference>
<gene>
    <name type="primary">GSH2</name>
</gene>
<feature type="transit peptide" description="Chloroplast" evidence="2">
    <location>
        <begin position="1"/>
        <end position="63"/>
    </location>
</feature>
<feature type="chain" id="PRO_0000013060" description="Glutathione synthetase, chloroplastic">
    <location>
        <begin position="64"/>
        <end position="546"/>
    </location>
</feature>
<feature type="binding site" evidence="1">
    <location>
        <position position="200"/>
    </location>
    <ligand>
        <name>substrate</name>
    </ligand>
</feature>
<feature type="binding site" evidence="1">
    <location>
        <position position="216"/>
    </location>
    <ligand>
        <name>ATP</name>
        <dbReference type="ChEBI" id="CHEBI:30616"/>
    </ligand>
</feature>
<feature type="binding site" evidence="1">
    <location>
        <position position="216"/>
    </location>
    <ligand>
        <name>Mg(2+)</name>
        <dbReference type="ChEBI" id="CHEBI:18420"/>
    </ligand>
</feature>
<feature type="binding site" evidence="1">
    <location>
        <position position="218"/>
    </location>
    <ligand>
        <name>Mg(2+)</name>
        <dbReference type="ChEBI" id="CHEBI:18420"/>
    </ligand>
</feature>
<feature type="binding site" evidence="1">
    <location>
        <begin position="220"/>
        <end position="223"/>
    </location>
    <ligand>
        <name>substrate</name>
    </ligand>
</feature>
<feature type="binding site" evidence="1">
    <location>
        <begin position="288"/>
        <end position="290"/>
    </location>
    <ligand>
        <name>substrate</name>
    </ligand>
</feature>
<feature type="binding site" evidence="1">
    <location>
        <position position="294"/>
    </location>
    <ligand>
        <name>substrate</name>
    </ligand>
</feature>
<feature type="binding site" evidence="1">
    <location>
        <begin position="342"/>
        <end position="345"/>
    </location>
    <ligand>
        <name>substrate</name>
    </ligand>
</feature>
<feature type="binding site" evidence="1">
    <location>
        <position position="381"/>
    </location>
    <ligand>
        <name>ATP</name>
        <dbReference type="ChEBI" id="CHEBI:30616"/>
    </ligand>
</feature>
<feature type="binding site" evidence="1">
    <location>
        <begin position="435"/>
        <end position="444"/>
    </location>
    <ligand>
        <name>ATP</name>
        <dbReference type="ChEBI" id="CHEBI:30616"/>
    </ligand>
</feature>
<feature type="binding site" evidence="1">
    <location>
        <position position="439"/>
    </location>
    <ligand>
        <name>Mg(2+)</name>
        <dbReference type="ChEBI" id="CHEBI:18420"/>
    </ligand>
</feature>
<feature type="binding site" evidence="1">
    <location>
        <position position="446"/>
    </location>
    <ligand>
        <name>ATP</name>
        <dbReference type="ChEBI" id="CHEBI:30616"/>
    </ligand>
</feature>
<feature type="binding site" evidence="1">
    <location>
        <begin position="471"/>
        <end position="474"/>
    </location>
    <ligand>
        <name>ATP</name>
        <dbReference type="ChEBI" id="CHEBI:30616"/>
    </ligand>
</feature>
<feature type="binding site" evidence="1">
    <location>
        <position position="497"/>
    </location>
    <ligand>
        <name>ATP</name>
        <dbReference type="ChEBI" id="CHEBI:30616"/>
    </ligand>
</feature>
<feature type="binding site" evidence="1">
    <location>
        <position position="522"/>
    </location>
    <ligand>
        <name>substrate</name>
    </ligand>
</feature>
<feature type="binding site" evidence="1">
    <location>
        <position position="524"/>
    </location>
    <ligand>
        <name>ATP</name>
        <dbReference type="ChEBI" id="CHEBI:30616"/>
    </ligand>
</feature>
<feature type="binding site" evidence="1">
    <location>
        <position position="530"/>
    </location>
    <ligand>
        <name>ATP</name>
        <dbReference type="ChEBI" id="CHEBI:30616"/>
    </ligand>
</feature>
<feature type="binding site" evidence="1">
    <location>
        <begin position="533"/>
        <end position="534"/>
    </location>
    <ligand>
        <name>substrate</name>
    </ligand>
</feature>
<sequence>MGSGCSSPSISLTTIATSHFQSQESLSNSLNFYSPTRFLEPHLLKSSKIFIPKSPLKCAKVPEMQTQLEDSAKPIVDPHDIDSKLVQKLANDALVWCPLRGLLVGDRNSERSGTIPGVDMVHAPVALIPMSFPESHWKQACEVAPIFNELVDRVSQDGEFLQQSLSRTRKADPFTSRLLEIHSKMLEINKLEEIRLGLHRSDYMLDEQTKLLLQIELNTISSSFPGLSCLVSELHRSLLQQYREDIASDPNRIPANNAVNQFAEALAKAWNEYGDPRAVIIFVVQAEERNMYDQHWLSASLRERHQVTTIRKTLAEIDALGELQQDGTLVVDGQAVAVIYFRAGYAPSDYHSESEWKARLLMEQSRAVKCPSISYHLAGSKKIQQELAKPNVLERFLENKDDIAKLRKCFAGLWSLDESDIVKDAIERPELYVMKPQREGGGNNIYGEDVRGALLKLQKEGTGSDAAYILMQRIFPKISHSILMREGISHKEETISELGIYGTYLRNKTEVLINQQAGYLMRTKVSSSDEGGVAAGFAVLDSIYLV</sequence>
<accession>O22494</accession>
<keyword id="KW-0067">ATP-binding</keyword>
<keyword id="KW-0150">Chloroplast</keyword>
<keyword id="KW-0317">Glutathione biosynthesis</keyword>
<keyword id="KW-0436">Ligase</keyword>
<keyword id="KW-0460">Magnesium</keyword>
<keyword id="KW-0479">Metal-binding</keyword>
<keyword id="KW-0547">Nucleotide-binding</keyword>
<keyword id="KW-0934">Plastid</keyword>
<keyword id="KW-1185">Reference proteome</keyword>
<keyword id="KW-0809">Transit peptide</keyword>
<name>GSHB_SOLLC</name>
<evidence type="ECO:0000250" key="1"/>
<evidence type="ECO:0000255" key="2"/>
<evidence type="ECO:0000305" key="3"/>